<gene>
    <name type="ORF">DDB_G0286239</name>
</gene>
<comment type="function">
    <text evidence="1">Probable serine hydrolase.</text>
</comment>
<comment type="similarity">
    <text evidence="4">Belongs to the AB hydrolase superfamily.</text>
</comment>
<reference key="1">
    <citation type="journal article" date="2005" name="Nature">
        <title>The genome of the social amoeba Dictyostelium discoideum.</title>
        <authorList>
            <person name="Eichinger L."/>
            <person name="Pachebat J.A."/>
            <person name="Gloeckner G."/>
            <person name="Rajandream M.A."/>
            <person name="Sucgang R."/>
            <person name="Berriman M."/>
            <person name="Song J."/>
            <person name="Olsen R."/>
            <person name="Szafranski K."/>
            <person name="Xu Q."/>
            <person name="Tunggal B."/>
            <person name="Kummerfeld S."/>
            <person name="Madera M."/>
            <person name="Konfortov B.A."/>
            <person name="Rivero F."/>
            <person name="Bankier A.T."/>
            <person name="Lehmann R."/>
            <person name="Hamlin N."/>
            <person name="Davies R."/>
            <person name="Gaudet P."/>
            <person name="Fey P."/>
            <person name="Pilcher K."/>
            <person name="Chen G."/>
            <person name="Saunders D."/>
            <person name="Sodergren E.J."/>
            <person name="Davis P."/>
            <person name="Kerhornou A."/>
            <person name="Nie X."/>
            <person name="Hall N."/>
            <person name="Anjard C."/>
            <person name="Hemphill L."/>
            <person name="Bason N."/>
            <person name="Farbrother P."/>
            <person name="Desany B."/>
            <person name="Just E."/>
            <person name="Morio T."/>
            <person name="Rost R."/>
            <person name="Churcher C.M."/>
            <person name="Cooper J."/>
            <person name="Haydock S."/>
            <person name="van Driessche N."/>
            <person name="Cronin A."/>
            <person name="Goodhead I."/>
            <person name="Muzny D.M."/>
            <person name="Mourier T."/>
            <person name="Pain A."/>
            <person name="Lu M."/>
            <person name="Harper D."/>
            <person name="Lindsay R."/>
            <person name="Hauser H."/>
            <person name="James K.D."/>
            <person name="Quiles M."/>
            <person name="Madan Babu M."/>
            <person name="Saito T."/>
            <person name="Buchrieser C."/>
            <person name="Wardroper A."/>
            <person name="Felder M."/>
            <person name="Thangavelu M."/>
            <person name="Johnson D."/>
            <person name="Knights A."/>
            <person name="Loulseged H."/>
            <person name="Mungall K.L."/>
            <person name="Oliver K."/>
            <person name="Price C."/>
            <person name="Quail M.A."/>
            <person name="Urushihara H."/>
            <person name="Hernandez J."/>
            <person name="Rabbinowitsch E."/>
            <person name="Steffen D."/>
            <person name="Sanders M."/>
            <person name="Ma J."/>
            <person name="Kohara Y."/>
            <person name="Sharp S."/>
            <person name="Simmonds M.N."/>
            <person name="Spiegler S."/>
            <person name="Tivey A."/>
            <person name="Sugano S."/>
            <person name="White B."/>
            <person name="Walker D."/>
            <person name="Woodward J.R."/>
            <person name="Winckler T."/>
            <person name="Tanaka Y."/>
            <person name="Shaulsky G."/>
            <person name="Schleicher M."/>
            <person name="Weinstock G.M."/>
            <person name="Rosenthal A."/>
            <person name="Cox E.C."/>
            <person name="Chisholm R.L."/>
            <person name="Gibbs R.A."/>
            <person name="Loomis W.F."/>
            <person name="Platzer M."/>
            <person name="Kay R.R."/>
            <person name="Williams J.G."/>
            <person name="Dear P.H."/>
            <person name="Noegel A.A."/>
            <person name="Barrell B.G."/>
            <person name="Kuspa A."/>
        </authorList>
    </citation>
    <scope>NUCLEOTIDE SEQUENCE [LARGE SCALE GENOMIC DNA]</scope>
    <source>
        <strain>AX4</strain>
    </source>
</reference>
<feature type="chain" id="PRO_0000369252" description="Serine hydrolase-like protein DDB_G0286239">
    <location>
        <begin position="1"/>
        <end position="359"/>
    </location>
</feature>
<feature type="domain" description="AB hydrolase-1" evidence="2">
    <location>
        <begin position="38"/>
        <end position="289"/>
    </location>
</feature>
<feature type="region of interest" description="Disordered" evidence="3">
    <location>
        <begin position="310"/>
        <end position="359"/>
    </location>
</feature>
<feature type="compositionally biased region" description="Polar residues" evidence="3">
    <location>
        <begin position="334"/>
        <end position="351"/>
    </location>
</feature>
<feature type="active site" evidence="2">
    <location>
        <position position="111"/>
    </location>
</feature>
<sequence length="359" mass="40486">MNTNNNFSNGEEVSIHIGTGIDIAAKAWGPKESSQKMLALHGWLDNANTFDFIAPILAEKGIRIIAIDFIGHGLSPHKPSWCNLYYTDYITQVLDVAEALQWKTFSIMGHSMGAGIASIVAASMPHLVERIICLDFIGILSKEQDQIKAIQFAMQTRTTINNRKPHLYNNKQAIFDKLKANNPWIKDEAGQRLLDRSIESVISPTTGEQCYKLRHDPRLVGPSIFIMREAEVLLMLDEIQCPVLLIWGTTSSQQFQIKKNWTQIMEGRMSHIKNLKQLVVPGSHHFHMENTSAFSQDILEFMFEEKDLSFTPSSTTQQQQQQQQSAENKKGDNHNQIAEQDLSTSNTSSPIISKPKPNL</sequence>
<evidence type="ECO:0000250" key="1"/>
<evidence type="ECO:0000255" key="2"/>
<evidence type="ECO:0000256" key="3">
    <source>
        <dbReference type="SAM" id="MobiDB-lite"/>
    </source>
</evidence>
<evidence type="ECO:0000305" key="4"/>
<accession>Q54M29</accession>
<keyword id="KW-0378">Hydrolase</keyword>
<keyword id="KW-1185">Reference proteome</keyword>
<proteinExistence type="inferred from homology"/>
<dbReference type="EC" id="3.1.-.-"/>
<dbReference type="EMBL" id="AAFI02000085">
    <property type="protein sequence ID" value="EAL64295.2"/>
    <property type="molecule type" value="Genomic_DNA"/>
</dbReference>
<dbReference type="RefSeq" id="XP_637802.2">
    <property type="nucleotide sequence ID" value="XM_632710.2"/>
</dbReference>
<dbReference type="SMR" id="Q54M29"/>
<dbReference type="FunCoup" id="Q54M29">
    <property type="interactions" value="2"/>
</dbReference>
<dbReference type="STRING" id="44689.Q54M29"/>
<dbReference type="ESTHER" id="dicdi-q54m29">
    <property type="family name" value="AlphaBeta_hydrolase"/>
</dbReference>
<dbReference type="GlyGen" id="Q54M29">
    <property type="glycosylation" value="1 site"/>
</dbReference>
<dbReference type="PaxDb" id="44689-DDB0302496"/>
<dbReference type="EnsemblProtists" id="EAL64295">
    <property type="protein sequence ID" value="EAL64295"/>
    <property type="gene ID" value="DDB_G0286239"/>
</dbReference>
<dbReference type="GeneID" id="8625516"/>
<dbReference type="KEGG" id="ddi:DDB_G0286239"/>
<dbReference type="dictyBase" id="DDB_G0286239"/>
<dbReference type="VEuPathDB" id="AmoebaDB:DDB_G0286239"/>
<dbReference type="eggNOG" id="KOG1454">
    <property type="taxonomic scope" value="Eukaryota"/>
</dbReference>
<dbReference type="HOGENOM" id="CLU_020336_8_2_1"/>
<dbReference type="InParanoid" id="Q54M29"/>
<dbReference type="OMA" id="HGWMDVS"/>
<dbReference type="PhylomeDB" id="Q54M29"/>
<dbReference type="PRO" id="PR:Q54M29"/>
<dbReference type="Proteomes" id="UP000002195">
    <property type="component" value="Chromosome 4"/>
</dbReference>
<dbReference type="GO" id="GO:0016020">
    <property type="term" value="C:membrane"/>
    <property type="evidence" value="ECO:0000318"/>
    <property type="project" value="GO_Central"/>
</dbReference>
<dbReference type="GO" id="GO:0016787">
    <property type="term" value="F:hydrolase activity"/>
    <property type="evidence" value="ECO:0007669"/>
    <property type="project" value="UniProtKB-KW"/>
</dbReference>
<dbReference type="Gene3D" id="3.40.50.1820">
    <property type="entry name" value="alpha/beta hydrolase"/>
    <property type="match status" value="1"/>
</dbReference>
<dbReference type="InterPro" id="IPR000073">
    <property type="entry name" value="AB_hydrolase_1"/>
</dbReference>
<dbReference type="InterPro" id="IPR029058">
    <property type="entry name" value="AB_hydrolase_fold"/>
</dbReference>
<dbReference type="InterPro" id="IPR050266">
    <property type="entry name" value="AB_hydrolase_sf"/>
</dbReference>
<dbReference type="PANTHER" id="PTHR43798">
    <property type="entry name" value="MONOACYLGLYCEROL LIPASE"/>
    <property type="match status" value="1"/>
</dbReference>
<dbReference type="PANTHER" id="PTHR43798:SF14">
    <property type="entry name" value="SERINE HYDROLASE-LIKE PROTEIN DDB_G0286239"/>
    <property type="match status" value="1"/>
</dbReference>
<dbReference type="Pfam" id="PF00561">
    <property type="entry name" value="Abhydrolase_1"/>
    <property type="match status" value="1"/>
</dbReference>
<dbReference type="PRINTS" id="PR00111">
    <property type="entry name" value="ABHYDROLASE"/>
</dbReference>
<dbReference type="SUPFAM" id="SSF53474">
    <property type="entry name" value="alpha/beta-Hydrolases"/>
    <property type="match status" value="1"/>
</dbReference>
<protein>
    <recommendedName>
        <fullName>Serine hydrolase-like protein DDB_G0286239</fullName>
        <ecNumber>3.1.-.-</ecNumber>
    </recommendedName>
</protein>
<organism>
    <name type="scientific">Dictyostelium discoideum</name>
    <name type="common">Social amoeba</name>
    <dbReference type="NCBI Taxonomy" id="44689"/>
    <lineage>
        <taxon>Eukaryota</taxon>
        <taxon>Amoebozoa</taxon>
        <taxon>Evosea</taxon>
        <taxon>Eumycetozoa</taxon>
        <taxon>Dictyostelia</taxon>
        <taxon>Dictyosteliales</taxon>
        <taxon>Dictyosteliaceae</taxon>
        <taxon>Dictyostelium</taxon>
    </lineage>
</organism>
<name>Y6239_DICDI</name>